<reference key="1">
    <citation type="journal article" date="1993" name="Genes Dev.">
        <title>Cloning and characterization of PSF, a novel pre-mRNA splicing factor.</title>
        <authorList>
            <person name="Patton J.G."/>
            <person name="Porro E.B."/>
            <person name="Galceran J."/>
            <person name="Tempst P."/>
            <person name="Nadal-Ginard B."/>
        </authorList>
    </citation>
    <scope>NUCLEOTIDE SEQUENCE [MRNA]</scope>
    <scope>PARTIAL PROTEIN SEQUENCE</scope>
    <scope>ALTERNATIVE SPLICING</scope>
    <scope>FUNCTION</scope>
    <source>
        <tissue>Fetal brain</tissue>
    </source>
</reference>
<reference key="2">
    <citation type="journal article" date="2006" name="Nature">
        <title>The DNA sequence and biological annotation of human chromosome 1.</title>
        <authorList>
            <person name="Gregory S.G."/>
            <person name="Barlow K.F."/>
            <person name="McLay K.E."/>
            <person name="Kaul R."/>
            <person name="Swarbreck D."/>
            <person name="Dunham A."/>
            <person name="Scott C.E."/>
            <person name="Howe K.L."/>
            <person name="Woodfine K."/>
            <person name="Spencer C.C.A."/>
            <person name="Jones M.C."/>
            <person name="Gillson C."/>
            <person name="Searle S."/>
            <person name="Zhou Y."/>
            <person name="Kokocinski F."/>
            <person name="McDonald L."/>
            <person name="Evans R."/>
            <person name="Phillips K."/>
            <person name="Atkinson A."/>
            <person name="Cooper R."/>
            <person name="Jones C."/>
            <person name="Hall R.E."/>
            <person name="Andrews T.D."/>
            <person name="Lloyd C."/>
            <person name="Ainscough R."/>
            <person name="Almeida J.P."/>
            <person name="Ambrose K.D."/>
            <person name="Anderson F."/>
            <person name="Andrew R.W."/>
            <person name="Ashwell R.I.S."/>
            <person name="Aubin K."/>
            <person name="Babbage A.K."/>
            <person name="Bagguley C.L."/>
            <person name="Bailey J."/>
            <person name="Beasley H."/>
            <person name="Bethel G."/>
            <person name="Bird C.P."/>
            <person name="Bray-Allen S."/>
            <person name="Brown J.Y."/>
            <person name="Brown A.J."/>
            <person name="Buckley D."/>
            <person name="Burton J."/>
            <person name="Bye J."/>
            <person name="Carder C."/>
            <person name="Chapman J.C."/>
            <person name="Clark S.Y."/>
            <person name="Clarke G."/>
            <person name="Clee C."/>
            <person name="Cobley V."/>
            <person name="Collier R.E."/>
            <person name="Corby N."/>
            <person name="Coville G.J."/>
            <person name="Davies J."/>
            <person name="Deadman R."/>
            <person name="Dunn M."/>
            <person name="Earthrowl M."/>
            <person name="Ellington A.G."/>
            <person name="Errington H."/>
            <person name="Frankish A."/>
            <person name="Frankland J."/>
            <person name="French L."/>
            <person name="Garner P."/>
            <person name="Garnett J."/>
            <person name="Gay L."/>
            <person name="Ghori M.R.J."/>
            <person name="Gibson R."/>
            <person name="Gilby L.M."/>
            <person name="Gillett W."/>
            <person name="Glithero R.J."/>
            <person name="Grafham D.V."/>
            <person name="Griffiths C."/>
            <person name="Griffiths-Jones S."/>
            <person name="Grocock R."/>
            <person name="Hammond S."/>
            <person name="Harrison E.S.I."/>
            <person name="Hart E."/>
            <person name="Haugen E."/>
            <person name="Heath P.D."/>
            <person name="Holmes S."/>
            <person name="Holt K."/>
            <person name="Howden P.J."/>
            <person name="Hunt A.R."/>
            <person name="Hunt S.E."/>
            <person name="Hunter G."/>
            <person name="Isherwood J."/>
            <person name="James R."/>
            <person name="Johnson C."/>
            <person name="Johnson D."/>
            <person name="Joy A."/>
            <person name="Kay M."/>
            <person name="Kershaw J.K."/>
            <person name="Kibukawa M."/>
            <person name="Kimberley A.M."/>
            <person name="King A."/>
            <person name="Knights A.J."/>
            <person name="Lad H."/>
            <person name="Laird G."/>
            <person name="Lawlor S."/>
            <person name="Leongamornlert D.A."/>
            <person name="Lloyd D.M."/>
            <person name="Loveland J."/>
            <person name="Lovell J."/>
            <person name="Lush M.J."/>
            <person name="Lyne R."/>
            <person name="Martin S."/>
            <person name="Mashreghi-Mohammadi M."/>
            <person name="Matthews L."/>
            <person name="Matthews N.S.W."/>
            <person name="McLaren S."/>
            <person name="Milne S."/>
            <person name="Mistry S."/>
            <person name="Moore M.J.F."/>
            <person name="Nickerson T."/>
            <person name="O'Dell C.N."/>
            <person name="Oliver K."/>
            <person name="Palmeiri A."/>
            <person name="Palmer S.A."/>
            <person name="Parker A."/>
            <person name="Patel D."/>
            <person name="Pearce A.V."/>
            <person name="Peck A.I."/>
            <person name="Pelan S."/>
            <person name="Phelps K."/>
            <person name="Phillimore B.J."/>
            <person name="Plumb R."/>
            <person name="Rajan J."/>
            <person name="Raymond C."/>
            <person name="Rouse G."/>
            <person name="Saenphimmachak C."/>
            <person name="Sehra H.K."/>
            <person name="Sheridan E."/>
            <person name="Shownkeen R."/>
            <person name="Sims S."/>
            <person name="Skuce C.D."/>
            <person name="Smith M."/>
            <person name="Steward C."/>
            <person name="Subramanian S."/>
            <person name="Sycamore N."/>
            <person name="Tracey A."/>
            <person name="Tromans A."/>
            <person name="Van Helmond Z."/>
            <person name="Wall M."/>
            <person name="Wallis J.M."/>
            <person name="White S."/>
            <person name="Whitehead S.L."/>
            <person name="Wilkinson J.E."/>
            <person name="Willey D.L."/>
            <person name="Williams H."/>
            <person name="Wilming L."/>
            <person name="Wray P.W."/>
            <person name="Wu Z."/>
            <person name="Coulson A."/>
            <person name="Vaudin M."/>
            <person name="Sulston J.E."/>
            <person name="Durbin R.M."/>
            <person name="Hubbard T."/>
            <person name="Wooster R."/>
            <person name="Dunham I."/>
            <person name="Carter N.P."/>
            <person name="McVean G."/>
            <person name="Ross M.T."/>
            <person name="Harrow J."/>
            <person name="Olson M.V."/>
            <person name="Beck S."/>
            <person name="Rogers J."/>
            <person name="Bentley D.R."/>
        </authorList>
    </citation>
    <scope>NUCLEOTIDE SEQUENCE [LARGE SCALE GENOMIC DNA]</scope>
</reference>
<reference key="3">
    <citation type="submission" date="2005-09" db="EMBL/GenBank/DDBJ databases">
        <authorList>
            <person name="Mural R.J."/>
            <person name="Istrail S."/>
            <person name="Sutton G.G."/>
            <person name="Florea L."/>
            <person name="Halpern A.L."/>
            <person name="Mobarry C.M."/>
            <person name="Lippert R."/>
            <person name="Walenz B."/>
            <person name="Shatkay H."/>
            <person name="Dew I."/>
            <person name="Miller J.R."/>
            <person name="Flanigan M.J."/>
            <person name="Edwards N.J."/>
            <person name="Bolanos R."/>
            <person name="Fasulo D."/>
            <person name="Halldorsson B.V."/>
            <person name="Hannenhalli S."/>
            <person name="Turner R."/>
            <person name="Yooseph S."/>
            <person name="Lu F."/>
            <person name="Nusskern D.R."/>
            <person name="Shue B.C."/>
            <person name="Zheng X.H."/>
            <person name="Zhong F."/>
            <person name="Delcher A.L."/>
            <person name="Huson D.H."/>
            <person name="Kravitz S.A."/>
            <person name="Mouchard L."/>
            <person name="Reinert K."/>
            <person name="Remington K.A."/>
            <person name="Clark A.G."/>
            <person name="Waterman M.S."/>
            <person name="Eichler E.E."/>
            <person name="Adams M.D."/>
            <person name="Hunkapiller M.W."/>
            <person name="Myers E.W."/>
            <person name="Venter J.C."/>
        </authorList>
    </citation>
    <scope>NUCLEOTIDE SEQUENCE [LARGE SCALE GENOMIC DNA]</scope>
</reference>
<reference key="4">
    <citation type="submission" date="2008-12" db="UniProtKB">
        <authorList>
            <person name="Bienvenut W.V."/>
            <person name="Lilla S."/>
            <person name="von Kriegsheim A."/>
            <person name="Lempens A."/>
            <person name="Kolch W."/>
        </authorList>
    </citation>
    <scope>PROTEIN SEQUENCE OF 33-44; 218-236; 246-267; 272-286; 299-315; 320-330; 350-358; 364-407; 414-425; 431-462; 480-493; 517-536; 549-559; 567-572; 575-581; 600-606; 612-630 AND 667-695</scope>
    <scope>METHYLATION AT LYS-314; ARG-571; ARG-681 AND ARG-693</scope>
    <scope>IDENTIFICATION BY MASS SPECTROMETRY</scope>
    <source>
        <tissue>Ovarian carcinoma</tissue>
    </source>
</reference>
<reference key="5">
    <citation type="journal article" date="1993" name="Biochem. J.">
        <title>Purification and characterization of a DNA-binding heterodimer of 52 and 100 kDa from HeLa cells.</title>
        <authorList>
            <person name="Zhang W.-W."/>
            <person name="Zhang L.-X."/>
            <person name="Busch R.K."/>
            <person name="Farres J."/>
            <person name="Busch H."/>
        </authorList>
    </citation>
    <scope>PROTEIN SEQUENCE OF 48-68 AND 213-246</scope>
    <scope>BLOCKAGE OF N-TERMINUS</scope>
    <scope>DNA-BINDING</scope>
    <scope>SUBUNIT</scope>
</reference>
<reference key="6">
    <citation type="journal article" date="1997" name="RNA">
        <title>The human U5 snRNP-specific 100-kD protein is an RS domain-containing, putative RNA helicase with significant homology to the yeast splicing factor Prp28p.</title>
        <authorList>
            <person name="Teigelkamp S."/>
            <person name="Mundt C."/>
            <person name="Achsel T."/>
            <person name="Will C.L."/>
            <person name="Luehrmann R."/>
        </authorList>
    </citation>
    <scope>PROTEIN SEQUENCE OF 292-311; 415-421 AND 503-510</scope>
    <scope>IDENTIFICATION IN U5/4/6 SNRNP COMPLEXES</scope>
</reference>
<reference key="7">
    <citation type="submission" date="2008-12" db="UniProtKB">
        <authorList>
            <person name="Lubec G."/>
            <person name="Chen W.-Q."/>
            <person name="Sun Y."/>
        </authorList>
    </citation>
    <scope>PROTEIN SEQUENCE OF 299-314 AND 480-493</scope>
    <scope>IDENTIFICATION BY MASS SPECTROMETRY</scope>
    <source>
        <tissue>Fetal brain cortex</tissue>
    </source>
</reference>
<reference key="8">
    <citation type="journal article" date="1989" name="Development">
        <title>Cloning and characterization of a myoblast cell surface antigen defined by 24.1D5 monoclonal antibody.</title>
        <authorList>
            <person name="Gower H.J."/>
            <person name="Moore S.E."/>
            <person name="Dickson G."/>
            <person name="Elsom V.L."/>
            <person name="Nayak R."/>
            <person name="Walsh F.S."/>
        </authorList>
    </citation>
    <scope>NUCLEOTIDE SEQUENCE [MRNA] OF 312-707</scope>
    <source>
        <tissue>Fetal skeletal muscle</tissue>
    </source>
</reference>
<reference key="9">
    <citation type="journal article" date="1998" name="RNA">
        <title>The snRNP-free U1A (SF-A) complex(es): identification of the largest subunit as PSF, the polypyrimidine-tract binding protein-associated splicing factor.</title>
        <authorList>
            <person name="Lutz C.S."/>
            <person name="Cooke C."/>
            <person name="O'Connor J.P."/>
            <person name="Kobayashi R."/>
            <person name="Alwine J.C."/>
        </authorList>
    </citation>
    <scope>PROTEIN SEQUENCE OF 414-421 AND 427-448</scope>
    <scope>SUBCELLULAR LOCATION</scope>
    <scope>INTERACTION WITH SNRPA</scope>
    <scope>IDENTIFICATION IN A SNRNP-FREE COMPLEX WITH SNRPA</scope>
</reference>
<reference key="10">
    <citation type="journal article" date="2000" name="J. Cell. Biochem.">
        <title>Differential nuclear localization and nuclear matrix association of the splicing factors PSF and PTB.</title>
        <authorList>
            <person name="Meissner M."/>
            <person name="Dechat T."/>
            <person name="Gerner C."/>
            <person name="Grimm R."/>
            <person name="Foisner R."/>
            <person name="Sauermann G."/>
        </authorList>
    </citation>
    <scope>PROTEIN SEQUENCE OF 600-606 AND 667-677</scope>
    <scope>INTERACTION WITH PTBP1</scope>
    <scope>SUBCELLULAR LOCATION</scope>
</reference>
<reference key="11">
    <citation type="journal article" date="1994" name="EMBO J.">
        <title>A novel set of spliceosome-associated proteins and the essential splicing factor PSF bind stably to pre-mRNA prior to catalytic step II of the splicing reaction.</title>
        <authorList>
            <person name="Gozani O."/>
            <person name="Patton J.G."/>
            <person name="Reed R."/>
        </authorList>
    </citation>
    <scope>FUNCTION</scope>
    <scope>INTERACTION WITH PRE-MRNA</scope>
    <scope>IDENTIFICATION IN SPLICEOSOME COMPLEX</scope>
</reference>
<reference key="12">
    <citation type="journal article" date="1997" name="Oncogene">
        <title>Fusion of splicing factor genes PSF and NonO (p54nrb) to the TFE3 gene in papillary renal cell carcinoma.</title>
        <authorList>
            <person name="Clark J."/>
            <person name="Lu Y.-J."/>
            <person name="Sidhar S.K."/>
            <person name="Parker C."/>
            <person name="Gill S."/>
            <person name="Smedley D."/>
            <person name="Hamoudi R."/>
            <person name="Linehan W.M."/>
            <person name="Shipley J."/>
            <person name="Cooper C.S."/>
        </authorList>
    </citation>
    <scope>CHROMOSOMAL TRANSLOCATION WITH TFE3</scope>
</reference>
<reference key="13">
    <citation type="journal article" date="1998" name="J. Biol. Chem.">
        <title>The RNA-splicing factor PSF/p54 controls DNA-topoisomerase I activity by a direct interaction.</title>
        <authorList>
            <person name="Straub T."/>
            <person name="Grue P."/>
            <person name="Uhse A."/>
            <person name="Lisby M."/>
            <person name="Knudsen B.R."/>
            <person name="Tange T.O."/>
            <person name="Westergaard O."/>
            <person name="Boege F."/>
        </authorList>
    </citation>
    <scope>INTERACTION WITH TOP1</scope>
    <scope>IDENTIFICATION IN A COMPLEX WITH NONO AND TOP1</scope>
</reference>
<reference key="14">
    <citation type="journal article" date="2000" name="Biochemistry">
        <title>PSF/p54(nrb) stimulates 'jumping' of DNA topoisomerase I between separate DNA helices.</title>
        <authorList>
            <person name="Straub T."/>
            <person name="Knudsen B.R."/>
            <person name="Boege F."/>
        </authorList>
    </citation>
    <scope>FUNCTION IN DNA UNWINDING</scope>
</reference>
<reference key="15">
    <citation type="journal article" date="2000" name="Mol. Endocrinol.">
        <title>Polypyrimidine tract-binding protein-associated splicing factor is a negative regulator of transcriptional activity of the porcine p450scc insulin-like growth factor response element.</title>
        <authorList>
            <person name="Urban R.J."/>
            <person name="Bodenburg Y."/>
            <person name="Kurosky A."/>
            <person name="Wood T.G."/>
            <person name="Gasic S."/>
        </authorList>
    </citation>
    <scope>FUNCTION IN TRANSCRIPTION REGULATION</scope>
    <scope>IDENTIFICATION BY MASS SPECTROMETRY</scope>
</reference>
<reference key="16">
    <citation type="journal article" date="2000" name="Nucleic Acids Res.">
        <title>Human 100-kDa homologous DNA-pairing protein is the splicing factor PSF and promotes DNA strand invasion.</title>
        <authorList>
            <person name="Akhmedov A.T."/>
            <person name="Lopez B.S."/>
        </authorList>
    </citation>
    <scope>FUNCTION IN HOMOLOGOUS DNA PAIRING</scope>
    <scope>PHOSPHORYLATION</scope>
</reference>
<reference key="17">
    <citation type="journal article" date="2001" name="Cell">
        <title>The fate of dsRNA in the nucleus: a p54(nrb)-containing complex mediates the nuclear retention of promiscuously A-to-I edited RNAs.</title>
        <authorList>
            <person name="Zhang Z."/>
            <person name="Carmichael G.G."/>
        </authorList>
    </citation>
    <scope>FUNCTION IN NUCLEAR RETENTION OF A-TO-I EDITED RNAS</scope>
    <scope>IDENTIFICATION IN A COMPLEX WITH NONO AND MATR3</scope>
</reference>
<reference key="18">
    <citation type="journal article" date="2001" name="Mol. Biol. Cell">
        <title>Nuclear relocalization of the pre-mRNA splicing factor PSF during apoptosis involves hyperphosphorylation, masking of antigenic epitopes, and changes in protein interactions.</title>
        <authorList>
            <person name="Shav-Tal Y."/>
            <person name="Cohen M."/>
            <person name="Lapter S."/>
            <person name="Dye B."/>
            <person name="Patton J.G."/>
            <person name="Vandekerckhove J."/>
            <person name="Zipori D."/>
        </authorList>
    </citation>
    <scope>INTERACTION WITH SNRNP70</scope>
    <scope>PHOSPHORYLATION</scope>
</reference>
<reference key="19">
    <citation type="journal article" date="2001" name="Mol. Cell. Biol.">
        <title>PSF is a novel corepressor that mediates its effect through Sin3A and the DNA binding domain of nuclear hormone receptors.</title>
        <authorList>
            <person name="Mathur M."/>
            <person name="Tucker P.W."/>
            <person name="Samuels H.H."/>
        </authorList>
    </citation>
    <scope>FUNCTION IN TRANSCRIPTION REGULATION</scope>
    <scope>INTERACTION WITH RXRA; THRA AND SIN3A</scope>
</reference>
<reference key="20">
    <citation type="journal article" date="2002" name="Endocrinology">
        <title>Transcriptional activation of human CYP17 in H295R adrenocortical cells depends on complex formation among p54(nrb)/NonO, protein-associated splicing factor, and SF-1, a complex that also participates in repression of transcription.</title>
        <authorList>
            <person name="Sewer M.B."/>
            <person name="Nguyen V.Q."/>
            <person name="Huang C.J."/>
            <person name="Tucker P.W."/>
            <person name="Kagawa N."/>
            <person name="Waterman M.R."/>
        </authorList>
    </citation>
    <scope>FUNCTION IN TRANSCRIPTION REGULATION</scope>
    <scope>INTERACTION WITH NR5A1 AND SIN3A</scope>
    <scope>IDENTIFICATION IN A COMPLEX WITH NONO AND NR5A1</scope>
</reference>
<reference key="21">
    <citation type="journal article" date="2002" name="RNA">
        <title>PSF and p54nrb bind a conserved stem in U5 snRNA.</title>
        <authorList>
            <person name="Peng R."/>
            <person name="Dye B.T."/>
            <person name="Perez I."/>
            <person name="Barnard D.C."/>
            <person name="Thompson A.B."/>
            <person name="Patton J.G."/>
        </authorList>
    </citation>
    <scope>INTERACTION WITH NONO AND U5 SNRNA</scope>
    <scope>IDENTIFICATION IN U5/4/6 SNRNP AND SPLICEOSOME COMPLEXES</scope>
</reference>
<reference key="22">
    <citation type="journal article" date="2003" name="Nature">
        <title>Proteomic characterization of the human centrosome by protein correlation profiling.</title>
        <authorList>
            <person name="Andersen J.S."/>
            <person name="Wilkinson C.J."/>
            <person name="Mayor T."/>
            <person name="Mortensen P."/>
            <person name="Nigg E.A."/>
            <person name="Mann M."/>
        </authorList>
    </citation>
    <scope>IDENTIFICATION BY MASS SPECTROMETRY</scope>
    <source>
        <tissue>Lymphoblast</tissue>
    </source>
</reference>
<reference key="23">
    <citation type="journal article" date="2005" name="J. Biol. Chem.">
        <title>Identification of the polypyrimidine tract binding protein-associated splicing factor.p54(nrb) complex as a candidate DNA double-strand break rejoining factor.</title>
        <authorList>
            <person name="Bladen C.L."/>
            <person name="Udayakumar D."/>
            <person name="Takeda Y."/>
            <person name="Dynan W.S."/>
        </authorList>
    </citation>
    <scope>FUNCTION IN DNA REPAIR</scope>
    <scope>IDENTIFICATION BY MASS SPECTROMETRY</scope>
    <scope>DNA-BINDING</scope>
    <scope>SUBUNIT</scope>
</reference>
<reference key="24">
    <citation type="journal article" date="2006" name="Nat. Cell Biol.">
        <title>Regulation of RNA-polymerase-II-dependent transcription by N-WASP and its nuclear-binding partners.</title>
        <authorList>
            <person name="Wu X."/>
            <person name="Yoo Y."/>
            <person name="Okuhama N.N."/>
            <person name="Tucker P.W."/>
            <person name="Liu G."/>
            <person name="Guan J.L."/>
        </authorList>
    </citation>
    <scope>IDENTIFICATION IN A COMPLEX WITH NONO AND WASL</scope>
</reference>
<reference key="25">
    <citation type="journal article" date="2007" name="Blood">
        <title>NPM/ALK binds and phosphorylates the RNA/DNA-binding protein PSF in anaplastic large-cell lymphoma.</title>
        <authorList>
            <person name="Galietta A."/>
            <person name="Gunby R.H."/>
            <person name="Redaelli S."/>
            <person name="Stano P."/>
            <person name="Carniti C."/>
            <person name="Bachi A."/>
            <person name="Tucker P.W."/>
            <person name="Tartari C.J."/>
            <person name="Huang C.J."/>
            <person name="Colombo E."/>
            <person name="Pulford K."/>
            <person name="Puttini M."/>
            <person name="Piazza R.G."/>
            <person name="Ruchatz H."/>
            <person name="Villa A."/>
            <person name="Donella-Deana A."/>
            <person name="Marin O."/>
            <person name="Perrotti D."/>
            <person name="Gambacorti-Passerini C."/>
        </authorList>
    </citation>
    <scope>PHOSPHORYLATION AT TYR-293</scope>
</reference>
<reference key="26">
    <citation type="journal article" date="2008" name="J. Biol. Chem.">
        <title>The PSF.p54nrb complex is a novel Mnk substrate that binds the mRNA for tumor necrosis factor alpha.</title>
        <authorList>
            <person name="Buxade M."/>
            <person name="Morrice N."/>
            <person name="Krebs D.L."/>
            <person name="Proud C.G."/>
        </authorList>
    </citation>
    <scope>PHOSPHORYLATION AT SER-8 AND SER-283 BY MKNK2</scope>
</reference>
<reference key="27">
    <citation type="journal article" date="2008" name="J. Proteome Res.">
        <title>Combining protein-based IMAC, peptide-based IMAC, and MudPIT for efficient phosphoproteomic analysis.</title>
        <authorList>
            <person name="Cantin G.T."/>
            <person name="Yi W."/>
            <person name="Lu B."/>
            <person name="Park S.K."/>
            <person name="Xu T."/>
            <person name="Lee J.-D."/>
            <person name="Yates J.R. III"/>
        </authorList>
    </citation>
    <scope>PHOSPHORYLATION [LARGE SCALE ANALYSIS] AT THR-687</scope>
    <scope>IDENTIFICATION BY MASS SPECTROMETRY [LARGE SCALE ANALYSIS]</scope>
    <source>
        <tissue>Cervix carcinoma</tissue>
    </source>
</reference>
<reference key="28">
    <citation type="journal article" date="2008" name="Proc. Natl. Acad. Sci. U.S.A.">
        <title>A quantitative atlas of mitotic phosphorylation.</title>
        <authorList>
            <person name="Dephoure N."/>
            <person name="Zhou C."/>
            <person name="Villen J."/>
            <person name="Beausoleil S.A."/>
            <person name="Bakalarski C.E."/>
            <person name="Elledge S.J."/>
            <person name="Gygi S.P."/>
        </authorList>
    </citation>
    <scope>PHOSPHORYLATION [LARGE SCALE ANALYSIS] AT SER-273 AND THR-687</scope>
    <scope>IDENTIFICATION BY MASS SPECTROMETRY [LARGE SCALE ANALYSIS]</scope>
    <source>
        <tissue>Cervix carcinoma</tissue>
    </source>
</reference>
<reference key="29">
    <citation type="journal article" date="2008" name="Proteomics">
        <title>Proteomic identification of a PSF/p54nrb heterodimer as RNF43 oncoprotein-interacting proteins.</title>
        <authorList>
            <person name="Miyamoto K."/>
            <person name="Sakurai H."/>
            <person name="Sugiura T."/>
        </authorList>
    </citation>
    <scope>INTERACTION WITH RNF43</scope>
</reference>
<reference key="30">
    <citation type="journal article" date="2009" name="Anal. Chem.">
        <title>Lys-N and trypsin cover complementary parts of the phosphoproteome in a refined SCX-based approach.</title>
        <authorList>
            <person name="Gauci S."/>
            <person name="Helbig A.O."/>
            <person name="Slijper M."/>
            <person name="Krijgsveld J."/>
            <person name="Heck A.J."/>
            <person name="Mohammed S."/>
        </authorList>
    </citation>
    <scope>IDENTIFICATION BY MASS SPECTROMETRY [LARGE SCALE ANALYSIS]</scope>
</reference>
<reference key="31">
    <citation type="journal article" date="2009" name="Cell. Signal.">
        <title>BRK phosphorylates PSF promoting its cytoplasmic localization and cell cycle arrest.</title>
        <authorList>
            <person name="Lukong K.E."/>
            <person name="Huot M.E."/>
            <person name="Richard S."/>
        </authorList>
    </citation>
    <scope>PHOSPHORYLATION</scope>
    <scope>INTERACTION WITH PTK6</scope>
    <scope>SUBCELLULAR LOCATION</scope>
</reference>
<reference key="32">
    <citation type="journal article" date="2009" name="Sci. Signal.">
        <title>Quantitative phosphoproteomic analysis of T cell receptor signaling reveals system-wide modulation of protein-protein interactions.</title>
        <authorList>
            <person name="Mayya V."/>
            <person name="Lundgren D.H."/>
            <person name="Hwang S.-I."/>
            <person name="Rezaul K."/>
            <person name="Wu L."/>
            <person name="Eng J.K."/>
            <person name="Rodionov V."/>
            <person name="Han D.K."/>
        </authorList>
    </citation>
    <scope>PHOSPHORYLATION [LARGE SCALE ANALYSIS] AT SER-379</scope>
    <scope>IDENTIFICATION BY MASS SPECTROMETRY [LARGE SCALE ANALYSIS]</scope>
    <source>
        <tissue>Leukemic T-cell</tissue>
    </source>
</reference>
<reference key="33">
    <citation type="journal article" date="2009" name="Science">
        <title>Lysine acetylation targets protein complexes and co-regulates major cellular functions.</title>
        <authorList>
            <person name="Choudhary C."/>
            <person name="Kumar C."/>
            <person name="Gnad F."/>
            <person name="Nielsen M.L."/>
            <person name="Rehman M."/>
            <person name="Walther T.C."/>
            <person name="Olsen J.V."/>
            <person name="Mann M."/>
        </authorList>
    </citation>
    <scope>ACETYLATION [LARGE SCALE ANALYSIS] AT LYS-319; LYS-338; LYS-421 AND LYS-472</scope>
    <scope>IDENTIFICATION BY MASS SPECTROMETRY [LARGE SCALE ANALYSIS]</scope>
</reference>
<reference key="34">
    <citation type="journal article" date="2010" name="Mol. Cell">
        <title>Phosphorylation-dependent regulation of PSF by GSK3 controls CD45 alternative splicing.</title>
        <authorList>
            <person name="Heyd F."/>
            <person name="Lynch K.W."/>
        </authorList>
    </citation>
    <scope>FUNCTION</scope>
    <scope>PHOSPHORYLATION AT THR-687</scope>
    <scope>INTERACTION WITH THRAP3</scope>
    <scope>MUTAGENESIS OF THR-687</scope>
</reference>
<reference key="35">
    <citation type="journal article" date="2010" name="PLoS ONE">
        <title>Secreted Mycobacterium tuberculosis Rv3654c and Rv3655c proteins participate in the suppression of macrophage apoptosis.</title>
        <authorList>
            <person name="Danelishvili L."/>
            <person name="Yamazaki Y."/>
            <person name="Selker J."/>
            <person name="Bermudez L.E."/>
        </authorList>
    </citation>
    <scope>INTERACTION WITH M.TUBERCULOSIS RV3654C (MICROBIAL INFECTION)</scope>
</reference>
<reference key="36">
    <citation type="journal article" date="2010" name="Sci. Signal.">
        <title>Quantitative phosphoproteomics reveals widespread full phosphorylation site occupancy during mitosis.</title>
        <authorList>
            <person name="Olsen J.V."/>
            <person name="Vermeulen M."/>
            <person name="Santamaria A."/>
            <person name="Kumar C."/>
            <person name="Miller M.L."/>
            <person name="Jensen L.J."/>
            <person name="Gnad F."/>
            <person name="Cox J."/>
            <person name="Jensen T.S."/>
            <person name="Nigg E.A."/>
            <person name="Brunak S."/>
            <person name="Mann M."/>
        </authorList>
    </citation>
    <scope>PHOSPHORYLATION [LARGE SCALE ANALYSIS] AT SER-33 AND SER-626</scope>
    <scope>IDENTIFICATION BY MASS SPECTROMETRY [LARGE SCALE ANALYSIS]</scope>
    <source>
        <tissue>Cervix carcinoma</tissue>
    </source>
</reference>
<reference key="37">
    <citation type="journal article" date="2011" name="BMC Syst. Biol.">
        <title>Initial characterization of the human central proteome.</title>
        <authorList>
            <person name="Burkard T.R."/>
            <person name="Planyavsky M."/>
            <person name="Kaupe I."/>
            <person name="Breitwieser F.P."/>
            <person name="Buerckstuemmer T."/>
            <person name="Bennett K.L."/>
            <person name="Superti-Furga G."/>
            <person name="Colinge J."/>
        </authorList>
    </citation>
    <scope>IDENTIFICATION BY MASS SPECTROMETRY [LARGE SCALE ANALYSIS]</scope>
</reference>
<reference key="38">
    <citation type="journal article" date="2011" name="Hum. Mol. Genet.">
        <title>The X-chromosome-linked intellectual disability protein PQBP1 is a component of neuronal RNA granules and regulates the appearance of stress granules.</title>
        <authorList>
            <person name="Kunde S.A."/>
            <person name="Musante L."/>
            <person name="Grimme A."/>
            <person name="Fischer U."/>
            <person name="Mueller E."/>
            <person name="Wanker E.E."/>
            <person name="Kalscheuer V.M."/>
        </authorList>
    </citation>
    <scope>INTERACTION WITH PQBP1</scope>
</reference>
<reference key="39">
    <citation type="journal article" date="2011" name="Sci. Signal.">
        <title>System-wide temporal characterization of the proteome and phosphoproteome of human embryonic stem cell differentiation.</title>
        <authorList>
            <person name="Rigbolt K.T."/>
            <person name="Prokhorova T.A."/>
            <person name="Akimov V."/>
            <person name="Henningsen J."/>
            <person name="Johansen P.T."/>
            <person name="Kratchmarova I."/>
            <person name="Kassem M."/>
            <person name="Mann M."/>
            <person name="Olsen J.V."/>
            <person name="Blagoev B."/>
        </authorList>
    </citation>
    <scope>PHOSPHORYLATION [LARGE SCALE ANALYSIS] AT SER-33; SER-273 AND SER-283</scope>
    <scope>IDENTIFICATION BY MASS SPECTROMETRY [LARGE SCALE ANALYSIS]</scope>
</reference>
<reference key="40">
    <citation type="journal article" date="2013" name="J. Proteome Res.">
        <title>Toward a comprehensive characterization of a human cancer cell phosphoproteome.</title>
        <authorList>
            <person name="Zhou H."/>
            <person name="Di Palma S."/>
            <person name="Preisinger C."/>
            <person name="Peng M."/>
            <person name="Polat A.N."/>
            <person name="Heck A.J."/>
            <person name="Mohammed S."/>
        </authorList>
    </citation>
    <scope>PHOSPHORYLATION [LARGE SCALE ANALYSIS] AT SER-33; SER-273; SER-283; THR-368; SER-374; SER-496; SER-626; THR-687 AND TYR-691</scope>
    <scope>IDENTIFICATION BY MASS SPECTROMETRY [LARGE SCALE ANALYSIS]</scope>
    <source>
        <tissue>Cervix carcinoma</tissue>
        <tissue>Erythroleukemia</tissue>
    </source>
</reference>
<reference key="41">
    <citation type="journal article" date="2014" name="J. Proteomics">
        <title>An enzyme assisted RP-RPLC approach for in-depth analysis of human liver phosphoproteome.</title>
        <authorList>
            <person name="Bian Y."/>
            <person name="Song C."/>
            <person name="Cheng K."/>
            <person name="Dong M."/>
            <person name="Wang F."/>
            <person name="Huang J."/>
            <person name="Sun D."/>
            <person name="Wang L."/>
            <person name="Ye M."/>
            <person name="Zou H."/>
        </authorList>
    </citation>
    <scope>IDENTIFICATION BY MASS SPECTROMETRY [LARGE SCALE ANALYSIS]</scope>
    <source>
        <tissue>Liver</tissue>
    </source>
</reference>
<reference key="42">
    <citation type="journal article" date="2014" name="Mol. Cell. Proteomics">
        <title>Immunoaffinity enrichment and mass spectrometry analysis of protein methylation.</title>
        <authorList>
            <person name="Guo A."/>
            <person name="Gu H."/>
            <person name="Zhou J."/>
            <person name="Mulhern D."/>
            <person name="Wang Y."/>
            <person name="Lee K.A."/>
            <person name="Yang V."/>
            <person name="Aguiar M."/>
            <person name="Kornhauser J."/>
            <person name="Jia X."/>
            <person name="Ren J."/>
            <person name="Beausoleil S.A."/>
            <person name="Silva J.C."/>
            <person name="Vemulapalli V."/>
            <person name="Bedford M.T."/>
            <person name="Comb M.J."/>
        </authorList>
    </citation>
    <scope>METHYLATION [LARGE SCALE ANALYSIS] AT ARG-236; ARG-242; ARG-245; ARG-681; ARG-693 AND ARG-695</scope>
    <scope>IDENTIFICATION BY MASS SPECTROMETRY [LARGE SCALE ANALYSIS]</scope>
    <source>
        <tissue>Colon carcinoma</tissue>
    </source>
</reference>
<reference key="43">
    <citation type="journal article" date="2014" name="Nat. Struct. Mol. Biol.">
        <title>Uncovering global SUMOylation signaling networks in a site-specific manner.</title>
        <authorList>
            <person name="Hendriks I.A."/>
            <person name="D'Souza R.C."/>
            <person name="Yang B."/>
            <person name="Verlaan-de Vries M."/>
            <person name="Mann M."/>
            <person name="Vertegaal A.C."/>
        </authorList>
    </citation>
    <scope>SUMOYLATION [LARGE SCALE ANALYSIS] AT LYS-338</scope>
    <scope>IDENTIFICATION BY MASS SPECTROMETRY [LARGE SCALE ANALYSIS]</scope>
</reference>
<reference key="44">
    <citation type="journal article" date="2015" name="Mol. Cell. Proteomics">
        <title>System-wide analysis of SUMOylation dynamics in response to replication stress reveals novel small ubiquitin-like modified target proteins and acceptor lysines relevant for genome stability.</title>
        <authorList>
            <person name="Xiao Z."/>
            <person name="Chang J.G."/>
            <person name="Hendriks I.A."/>
            <person name="Sigurdsson J.O."/>
            <person name="Olsen J.V."/>
            <person name="Vertegaal A.C."/>
        </authorList>
    </citation>
    <scope>SUMOYLATION [LARGE SCALE ANALYSIS] AT LYS-338</scope>
    <scope>IDENTIFICATION BY MASS SPECTROMETRY [LARGE SCALE ANALYSIS]</scope>
</reference>
<reference key="45">
    <citation type="journal article" date="2015" name="PLoS ONE">
        <title>Identification of Novel Proteins Co-Purifying with Cockayne Syndrome Group B (CSB) Reveals Potential Roles for CSB in RNA Metabolism and Chromatin Dynamics.</title>
        <authorList>
            <person name="Nicolai S."/>
            <person name="Filippi S."/>
            <person name="Caputo M."/>
            <person name="Cipak L."/>
            <person name="Gregan J."/>
            <person name="Ammerer G."/>
            <person name="Frontini M."/>
            <person name="Willems D."/>
            <person name="Prantera G."/>
            <person name="Balajee A.S."/>
            <person name="Proietti-De-Santis L."/>
        </authorList>
    </citation>
    <scope>INTERACTION WITH ERCC6</scope>
</reference>
<reference key="46">
    <citation type="journal article" date="2015" name="Proteomics">
        <title>N-terminome analysis of the human mitochondrial proteome.</title>
        <authorList>
            <person name="Vaca Jacome A.S."/>
            <person name="Rabilloud T."/>
            <person name="Schaeffer-Reiss C."/>
            <person name="Rompais M."/>
            <person name="Ayoub D."/>
            <person name="Lane L."/>
            <person name="Bairoch A."/>
            <person name="Van Dorsselaer A."/>
            <person name="Carapito C."/>
        </authorList>
    </citation>
    <scope>IDENTIFICATION BY MASS SPECTROMETRY [LARGE SCALE ANALYSIS]</scope>
</reference>
<reference key="47">
    <citation type="journal article" date="2017" name="Mol. Cell">
        <title>HEXIM1 and NEAT1 Long non-coding RNA form a multi-subunit complex that regulates DNA-mediated innate immune response.</title>
        <authorList>
            <person name="Morchikh M."/>
            <person name="Cribier A."/>
            <person name="Raffel R."/>
            <person name="Amraoui S."/>
            <person name="Cau J."/>
            <person name="Severac D."/>
            <person name="Dubois E."/>
            <person name="Schwartz O."/>
            <person name="Bennasser Y."/>
            <person name="Benkirane M."/>
        </authorList>
    </citation>
    <scope>FUNCTION</scope>
    <scope>SUBCELLULAR LOCATION</scope>
    <scope>INTERACTION WITH PRKDC; XRCC5; XRCC6; HEXIM1; NONO; PSPC1; RBM14 AND MATR3</scope>
</reference>
<reference key="48">
    <citation type="journal article" date="2017" name="Nat. Struct. Mol. Biol.">
        <title>Site-specific mapping of the human SUMO proteome reveals co-modification with phosphorylation.</title>
        <authorList>
            <person name="Hendriks I.A."/>
            <person name="Lyon D."/>
            <person name="Young C."/>
            <person name="Jensen L.J."/>
            <person name="Vertegaal A.C."/>
            <person name="Nielsen M.L."/>
        </authorList>
    </citation>
    <scope>SUMOYLATION [LARGE SCALE ANALYSIS] AT LYS-271; LYS-279 AND LYS-338</scope>
    <scope>IDENTIFICATION BY MASS SPECTROMETRY [LARGE SCALE ANALYSIS]</scope>
</reference>
<reference key="49">
    <citation type="journal article" date="2015" name="Nucleic Acids Res.">
        <title>The structure of human SFPQ reveals a coiled-coil mediated polymer essential for functional aggregation in gene regulation.</title>
        <authorList>
            <person name="Lee M."/>
            <person name="Sadowska A."/>
            <person name="Bekere I."/>
            <person name="Ho D."/>
            <person name="Gully B.S."/>
            <person name="Lu Y."/>
            <person name="Iyer K.S."/>
            <person name="Trewhella J."/>
            <person name="Fox A.H."/>
            <person name="Bond C.S."/>
        </authorList>
    </citation>
    <scope>X-RAY CRYSTALLOGRAPHY (2.05 ANGSTROMS) OF 276-535</scope>
    <scope>COILED COIL</scope>
    <scope>SUBUNIT</scope>
    <scope>INTERACTION WITH NONO</scope>
    <scope>FUNCTION</scope>
    <scope>DOMAIN</scope>
    <scope>SUBCELLULAR LOCATION</scope>
    <scope>MUTAGENESIS OF LEU-535; LEU-539; LEU-546 AND MET-549</scope>
</reference>
<dbReference type="EMBL" id="X70944">
    <property type="protein sequence ID" value="CAA50283.1"/>
    <property type="molecule type" value="mRNA"/>
</dbReference>
<dbReference type="EMBL" id="AL590434">
    <property type="status" value="NOT_ANNOTATED_CDS"/>
    <property type="molecule type" value="Genomic_DNA"/>
</dbReference>
<dbReference type="EMBL" id="CH471059">
    <property type="protein sequence ID" value="EAX07426.1"/>
    <property type="molecule type" value="Genomic_DNA"/>
</dbReference>
<dbReference type="EMBL" id="X16850">
    <property type="protein sequence ID" value="CAA34747.1"/>
    <property type="molecule type" value="mRNA"/>
</dbReference>
<dbReference type="CCDS" id="CCDS388.1">
    <molecule id="P23246-1"/>
</dbReference>
<dbReference type="PIR" id="A46302">
    <property type="entry name" value="A46302"/>
</dbReference>
<dbReference type="PIR" id="S29770">
    <property type="entry name" value="S29770"/>
</dbReference>
<dbReference type="RefSeq" id="NP_005057.1">
    <molecule id="P23246-1"/>
    <property type="nucleotide sequence ID" value="NM_005066.3"/>
</dbReference>
<dbReference type="RefSeq" id="XP_005271169.1">
    <molecule id="P23246-1"/>
    <property type="nucleotide sequence ID" value="XM_005271112.6"/>
</dbReference>
<dbReference type="RefSeq" id="XP_005271170.1">
    <property type="nucleotide sequence ID" value="XM_005271113.4"/>
</dbReference>
<dbReference type="RefSeq" id="XP_005271172.1">
    <molecule id="P23246-2"/>
    <property type="nucleotide sequence ID" value="XM_005271115.5"/>
</dbReference>
<dbReference type="RefSeq" id="XP_016857542.1">
    <molecule id="P23246-1"/>
    <property type="nucleotide sequence ID" value="XM_017002053.3"/>
</dbReference>
<dbReference type="RefSeq" id="XP_016857543.1">
    <molecule id="P23246-1"/>
    <property type="nucleotide sequence ID" value="XM_017002054.3"/>
</dbReference>
<dbReference type="RefSeq" id="XP_054194136.1">
    <molecule id="P23246-1"/>
    <property type="nucleotide sequence ID" value="XM_054338161.1"/>
</dbReference>
<dbReference type="RefSeq" id="XP_054194137.1">
    <molecule id="P23246-1"/>
    <property type="nucleotide sequence ID" value="XM_054338162.1"/>
</dbReference>
<dbReference type="RefSeq" id="XP_054194138.1">
    <molecule id="P23246-1"/>
    <property type="nucleotide sequence ID" value="XM_054338163.1"/>
</dbReference>
<dbReference type="RefSeq" id="XP_054194140.1">
    <molecule id="P23246-2"/>
    <property type="nucleotide sequence ID" value="XM_054338165.1"/>
</dbReference>
<dbReference type="PDB" id="4WII">
    <property type="method" value="X-ray"/>
    <property type="resolution" value="2.05 A"/>
    <property type="chains" value="A/B=276-535"/>
</dbReference>
<dbReference type="PDB" id="4WIJ">
    <property type="method" value="X-ray"/>
    <property type="resolution" value="3.49 A"/>
    <property type="chains" value="A/B=276-598"/>
</dbReference>
<dbReference type="PDB" id="4WIK">
    <property type="method" value="X-ray"/>
    <property type="resolution" value="3.00 A"/>
    <property type="chains" value="A/B=369-598"/>
</dbReference>
<dbReference type="PDB" id="5WPA">
    <property type="method" value="X-ray"/>
    <property type="resolution" value="2.29 A"/>
    <property type="chains" value="A=276-535"/>
</dbReference>
<dbReference type="PDB" id="6NCQ">
    <property type="method" value="X-ray"/>
    <property type="resolution" value="1.90 A"/>
    <property type="chains" value="A=276-535"/>
</dbReference>
<dbReference type="PDB" id="6OWJ">
    <property type="method" value="X-ray"/>
    <property type="resolution" value="1.94 A"/>
    <property type="chains" value="A/B=276-535"/>
</dbReference>
<dbReference type="PDB" id="6WMZ">
    <property type="method" value="X-ray"/>
    <property type="resolution" value="2.85 A"/>
    <property type="chains" value="A/C=214-598"/>
</dbReference>
<dbReference type="PDB" id="7LRQ">
    <property type="method" value="X-ray"/>
    <property type="resolution" value="2.30 A"/>
    <property type="chains" value="A=276-535"/>
</dbReference>
<dbReference type="PDB" id="7LRU">
    <property type="method" value="X-ray"/>
    <property type="resolution" value="1.60 A"/>
    <property type="chains" value="B=278-456, B=505-535"/>
</dbReference>
<dbReference type="PDB" id="7PU5">
    <property type="method" value="X-ray"/>
    <property type="resolution" value="3.00 A"/>
    <property type="chains" value="B/D/F/H/J/L=277-535"/>
</dbReference>
<dbReference type="PDB" id="7SP0">
    <property type="method" value="X-ray"/>
    <property type="resolution" value="1.83 A"/>
    <property type="chains" value="A/B=276-535"/>
</dbReference>
<dbReference type="PDB" id="7UJ1">
    <property type="method" value="X-ray"/>
    <property type="resolution" value="3.50 A"/>
    <property type="chains" value="A/B=214-598"/>
</dbReference>
<dbReference type="PDB" id="7UK1">
    <property type="method" value="X-ray"/>
    <property type="resolution" value="2.70 A"/>
    <property type="chains" value="A/B=214-598"/>
</dbReference>
<dbReference type="PDBsum" id="4WII"/>
<dbReference type="PDBsum" id="4WIJ"/>
<dbReference type="PDBsum" id="4WIK"/>
<dbReference type="PDBsum" id="5WPA"/>
<dbReference type="PDBsum" id="6NCQ"/>
<dbReference type="PDBsum" id="6OWJ"/>
<dbReference type="PDBsum" id="6WMZ"/>
<dbReference type="PDBsum" id="7LRQ"/>
<dbReference type="PDBsum" id="7LRU"/>
<dbReference type="PDBsum" id="7PU5"/>
<dbReference type="PDBsum" id="7SP0"/>
<dbReference type="PDBsum" id="7UJ1"/>
<dbReference type="PDBsum" id="7UK1"/>
<dbReference type="SASBDB" id="P23246"/>
<dbReference type="SMR" id="P23246"/>
<dbReference type="BioGRID" id="112319">
    <property type="interactions" value="574"/>
</dbReference>
<dbReference type="ComplexPortal" id="CPX-7764">
    <property type="entry name" value="SFPQ-PSPC1 RNA-binding complex"/>
</dbReference>
<dbReference type="ComplexPortal" id="CPX-7765">
    <property type="entry name" value="SFPQ-NONO RNA-binding complex"/>
</dbReference>
<dbReference type="ComplexPortal" id="CPX-7782">
    <property type="entry name" value="SFPQ RNA-binding homodimer"/>
</dbReference>
<dbReference type="CORUM" id="P23246"/>
<dbReference type="DIP" id="DIP-31272N"/>
<dbReference type="FunCoup" id="P23246">
    <property type="interactions" value="3920"/>
</dbReference>
<dbReference type="IntAct" id="P23246">
    <property type="interactions" value="178"/>
</dbReference>
<dbReference type="MINT" id="P23246"/>
<dbReference type="STRING" id="9606.ENSP00000349748"/>
<dbReference type="DrugBank" id="DB11638">
    <property type="generic name" value="Artenimol"/>
</dbReference>
<dbReference type="DrugBank" id="DB09130">
    <property type="generic name" value="Copper"/>
</dbReference>
<dbReference type="GlyGen" id="P23246">
    <property type="glycosylation" value="8 sites, 1 O-linked glycan (3 sites)"/>
</dbReference>
<dbReference type="iPTMnet" id="P23246"/>
<dbReference type="MetOSite" id="P23246"/>
<dbReference type="PhosphoSitePlus" id="P23246"/>
<dbReference type="SwissPalm" id="P23246"/>
<dbReference type="BioMuta" id="SFPQ"/>
<dbReference type="DMDM" id="1709851"/>
<dbReference type="jPOST" id="P23246"/>
<dbReference type="MassIVE" id="P23246"/>
<dbReference type="PaxDb" id="9606-ENSP00000349748"/>
<dbReference type="PeptideAtlas" id="P23246"/>
<dbReference type="ProteomicsDB" id="54073">
    <molecule id="P23246-1"/>
</dbReference>
<dbReference type="ProteomicsDB" id="54074">
    <molecule id="P23246-2"/>
</dbReference>
<dbReference type="Pumba" id="P23246"/>
<dbReference type="Antibodypedia" id="4083">
    <property type="antibodies" value="327 antibodies from 36 providers"/>
</dbReference>
<dbReference type="DNASU" id="6421"/>
<dbReference type="Ensembl" id="ENST00000357214.6">
    <molecule id="P23246-1"/>
    <property type="protein sequence ID" value="ENSP00000349748.5"/>
    <property type="gene ID" value="ENSG00000116560.12"/>
</dbReference>
<dbReference type="GeneID" id="6421"/>
<dbReference type="KEGG" id="hsa:6421"/>
<dbReference type="MANE-Select" id="ENST00000357214.6">
    <property type="protein sequence ID" value="ENSP00000349748.5"/>
    <property type="RefSeq nucleotide sequence ID" value="NM_005066.3"/>
    <property type="RefSeq protein sequence ID" value="NP_005057.1"/>
</dbReference>
<dbReference type="UCSC" id="uc001bys.4">
    <molecule id="P23246-1"/>
    <property type="organism name" value="human"/>
</dbReference>
<dbReference type="AGR" id="HGNC:10774"/>
<dbReference type="CTD" id="6421"/>
<dbReference type="DisGeNET" id="6421"/>
<dbReference type="GeneCards" id="SFPQ"/>
<dbReference type="HGNC" id="HGNC:10774">
    <property type="gene designation" value="SFPQ"/>
</dbReference>
<dbReference type="HPA" id="ENSG00000116560">
    <property type="expression patterns" value="Low tissue specificity"/>
</dbReference>
<dbReference type="MalaCards" id="SFPQ"/>
<dbReference type="MIM" id="605199">
    <property type="type" value="gene"/>
</dbReference>
<dbReference type="neXtProt" id="NX_P23246"/>
<dbReference type="OpenTargets" id="ENSG00000116560"/>
<dbReference type="Orphanet" id="319308">
    <property type="disease" value="MiT family translocation renal cell carcinoma"/>
</dbReference>
<dbReference type="PharmGKB" id="PA35690"/>
<dbReference type="VEuPathDB" id="HostDB:ENSG00000116560"/>
<dbReference type="eggNOG" id="KOG0115">
    <property type="taxonomic scope" value="Eukaryota"/>
</dbReference>
<dbReference type="GeneTree" id="ENSGT00940000156221"/>
<dbReference type="HOGENOM" id="CLU_027185_1_0_1"/>
<dbReference type="InParanoid" id="P23246"/>
<dbReference type="OMA" id="QNRGPMA"/>
<dbReference type="OrthoDB" id="10067824at2759"/>
<dbReference type="PAN-GO" id="P23246">
    <property type="GO annotations" value="3 GO annotations based on evolutionary models"/>
</dbReference>
<dbReference type="PhylomeDB" id="P23246"/>
<dbReference type="TreeFam" id="TF315795"/>
<dbReference type="PathwayCommons" id="P23246"/>
<dbReference type="Reactome" id="R-HSA-8849468">
    <property type="pathway name" value="PTK6 Regulates Proteins Involved in RNA Processing"/>
</dbReference>
<dbReference type="Reactome" id="R-HSA-9635465">
    <property type="pathway name" value="Suppression of apoptosis"/>
</dbReference>
<dbReference type="SignaLink" id="P23246"/>
<dbReference type="SIGNOR" id="P23246"/>
<dbReference type="BioGRID-ORCS" id="6421">
    <property type="hits" value="798 hits in 1175 CRISPR screens"/>
</dbReference>
<dbReference type="CD-CODE" id="1A18FFC4">
    <property type="entry name" value="Paraspeckle"/>
</dbReference>
<dbReference type="CD-CODE" id="804901D1">
    <property type="entry name" value="Nuclear speckle"/>
</dbReference>
<dbReference type="CD-CODE" id="91857CE7">
    <property type="entry name" value="Nucleolus"/>
</dbReference>
<dbReference type="CD-CODE" id="DEE660B4">
    <property type="entry name" value="Stress granule"/>
</dbReference>
<dbReference type="ChiTaRS" id="SFPQ">
    <property type="organism name" value="human"/>
</dbReference>
<dbReference type="EvolutionaryTrace" id="P23246"/>
<dbReference type="GeneWiki" id="SFPQ"/>
<dbReference type="GenomeRNAi" id="6421"/>
<dbReference type="Pharos" id="P23246">
    <property type="development level" value="Tbio"/>
</dbReference>
<dbReference type="PRO" id="PR:P23246"/>
<dbReference type="Proteomes" id="UP000005640">
    <property type="component" value="Chromosome 1"/>
</dbReference>
<dbReference type="RNAct" id="P23246">
    <property type="molecule type" value="protein"/>
</dbReference>
<dbReference type="Bgee" id="ENSG00000116560">
    <property type="expression patterns" value="Expressed in tendon of biceps brachii and 207 other cell types or tissues"/>
</dbReference>
<dbReference type="ExpressionAtlas" id="P23246">
    <property type="expression patterns" value="baseline and differential"/>
</dbReference>
<dbReference type="GO" id="GO:0000785">
    <property type="term" value="C:chromatin"/>
    <property type="evidence" value="ECO:0000314"/>
    <property type="project" value="ParkinsonsUK-UCL"/>
</dbReference>
<dbReference type="GO" id="GO:0005829">
    <property type="term" value="C:cytosol"/>
    <property type="evidence" value="ECO:0000304"/>
    <property type="project" value="Reactome"/>
</dbReference>
<dbReference type="GO" id="GO:0030425">
    <property type="term" value="C:dendrite"/>
    <property type="evidence" value="ECO:0007669"/>
    <property type="project" value="GOC"/>
</dbReference>
<dbReference type="GO" id="GO:0016363">
    <property type="term" value="C:nuclear matrix"/>
    <property type="evidence" value="ECO:0000314"/>
    <property type="project" value="BHF-UCL"/>
</dbReference>
<dbReference type="GO" id="GO:0016607">
    <property type="term" value="C:nuclear speck"/>
    <property type="evidence" value="ECO:0007669"/>
    <property type="project" value="UniProtKB-SubCell"/>
</dbReference>
<dbReference type="GO" id="GO:0005654">
    <property type="term" value="C:nucleoplasm"/>
    <property type="evidence" value="ECO:0000314"/>
    <property type="project" value="BHF-UCL"/>
</dbReference>
<dbReference type="GO" id="GO:0005634">
    <property type="term" value="C:nucleus"/>
    <property type="evidence" value="ECO:0000314"/>
    <property type="project" value="ParkinsonsUK-UCL"/>
</dbReference>
<dbReference type="GO" id="GO:0042382">
    <property type="term" value="C:paraspeckles"/>
    <property type="evidence" value="ECO:0000314"/>
    <property type="project" value="UniProtKB"/>
</dbReference>
<dbReference type="GO" id="GO:0090575">
    <property type="term" value="C:RNA polymerase II transcription regulator complex"/>
    <property type="evidence" value="ECO:0000250"/>
    <property type="project" value="BHF-UCL"/>
</dbReference>
<dbReference type="GO" id="GO:0003682">
    <property type="term" value="F:chromatin binding"/>
    <property type="evidence" value="ECO:0000250"/>
    <property type="project" value="BHF-UCL"/>
</dbReference>
<dbReference type="GO" id="GO:0003677">
    <property type="term" value="F:DNA binding"/>
    <property type="evidence" value="ECO:0000314"/>
    <property type="project" value="UniProtKB"/>
</dbReference>
<dbReference type="GO" id="GO:0042826">
    <property type="term" value="F:histone deacetylase binding"/>
    <property type="evidence" value="ECO:0000353"/>
    <property type="project" value="ParkinsonsUK-UCL"/>
</dbReference>
<dbReference type="GO" id="GO:0042803">
    <property type="term" value="F:protein homodimerization activity"/>
    <property type="evidence" value="ECO:0000353"/>
    <property type="project" value="UniProtKB"/>
</dbReference>
<dbReference type="GO" id="GO:0003723">
    <property type="term" value="F:RNA binding"/>
    <property type="evidence" value="ECO:0007005"/>
    <property type="project" value="UniProtKB"/>
</dbReference>
<dbReference type="GO" id="GO:0000976">
    <property type="term" value="F:transcription cis-regulatory region binding"/>
    <property type="evidence" value="ECO:0000250"/>
    <property type="project" value="UniProtKB"/>
</dbReference>
<dbReference type="GO" id="GO:0002218">
    <property type="term" value="P:activation of innate immune response"/>
    <property type="evidence" value="ECO:0000314"/>
    <property type="project" value="UniProtKB"/>
</dbReference>
<dbReference type="GO" id="GO:0000380">
    <property type="term" value="P:alternative mRNA splicing, via spliceosome"/>
    <property type="evidence" value="ECO:0000315"/>
    <property type="project" value="BHF-UCL"/>
</dbReference>
<dbReference type="GO" id="GO:0006338">
    <property type="term" value="P:chromatin remodeling"/>
    <property type="evidence" value="ECO:0000250"/>
    <property type="project" value="UniProtKB"/>
</dbReference>
<dbReference type="GO" id="GO:0051276">
    <property type="term" value="P:chromosome organization"/>
    <property type="evidence" value="ECO:0007669"/>
    <property type="project" value="Ensembl"/>
</dbReference>
<dbReference type="GO" id="GO:0098963">
    <property type="term" value="P:dendritic transport of messenger ribonucleoprotein complex"/>
    <property type="evidence" value="ECO:0007669"/>
    <property type="project" value="Ensembl"/>
</dbReference>
<dbReference type="GO" id="GO:0000724">
    <property type="term" value="P:double-strand break repair via homologous recombination"/>
    <property type="evidence" value="ECO:0000315"/>
    <property type="project" value="MGI"/>
</dbReference>
<dbReference type="GO" id="GO:0045087">
    <property type="term" value="P:innate immune response"/>
    <property type="evidence" value="ECO:0007669"/>
    <property type="project" value="UniProtKB-KW"/>
</dbReference>
<dbReference type="GO" id="GO:0006397">
    <property type="term" value="P:mRNA processing"/>
    <property type="evidence" value="ECO:0000304"/>
    <property type="project" value="ProtInc"/>
</dbReference>
<dbReference type="GO" id="GO:0042754">
    <property type="term" value="P:negative regulation of circadian rhythm"/>
    <property type="evidence" value="ECO:0000250"/>
    <property type="project" value="UniProtKB"/>
</dbReference>
<dbReference type="GO" id="GO:0045892">
    <property type="term" value="P:negative regulation of DNA-templated transcription"/>
    <property type="evidence" value="ECO:0000250"/>
    <property type="project" value="UniProtKB"/>
</dbReference>
<dbReference type="GO" id="GO:0000122">
    <property type="term" value="P:negative regulation of transcription by RNA polymerase II"/>
    <property type="evidence" value="ECO:0000314"/>
    <property type="project" value="ParkinsonsUK-UCL"/>
</dbReference>
<dbReference type="GO" id="GO:1902177">
    <property type="term" value="P:positive regulation of oxidative stress-induced intrinsic apoptotic signaling pathway"/>
    <property type="evidence" value="ECO:0000314"/>
    <property type="project" value="ParkinsonsUK-UCL"/>
</dbReference>
<dbReference type="GO" id="GO:0045876">
    <property type="term" value="P:positive regulation of sister chromatid cohesion"/>
    <property type="evidence" value="ECO:0007669"/>
    <property type="project" value="Ensembl"/>
</dbReference>
<dbReference type="GO" id="GO:0045944">
    <property type="term" value="P:positive regulation of transcription by RNA polymerase II"/>
    <property type="evidence" value="ECO:0000315"/>
    <property type="project" value="UniProtKB"/>
</dbReference>
<dbReference type="GO" id="GO:0042752">
    <property type="term" value="P:regulation of circadian rhythm"/>
    <property type="evidence" value="ECO:0000250"/>
    <property type="project" value="UniProtKB"/>
</dbReference>
<dbReference type="GO" id="GO:0006355">
    <property type="term" value="P:regulation of DNA-templated transcription"/>
    <property type="evidence" value="ECO:0000318"/>
    <property type="project" value="GO_Central"/>
</dbReference>
<dbReference type="GO" id="GO:0048511">
    <property type="term" value="P:rhythmic process"/>
    <property type="evidence" value="ECO:0007669"/>
    <property type="project" value="UniProtKB-KW"/>
</dbReference>
<dbReference type="GO" id="GO:0008380">
    <property type="term" value="P:RNA splicing"/>
    <property type="evidence" value="ECO:0000304"/>
    <property type="project" value="ProtInc"/>
</dbReference>
<dbReference type="CDD" id="cd12948">
    <property type="entry name" value="NOPS_PSF"/>
    <property type="match status" value="1"/>
</dbReference>
<dbReference type="CDD" id="cd12587">
    <property type="entry name" value="RRM1_PSF"/>
    <property type="match status" value="1"/>
</dbReference>
<dbReference type="CDD" id="cd12590">
    <property type="entry name" value="RRM2_PSF"/>
    <property type="match status" value="1"/>
</dbReference>
<dbReference type="FunFam" id="3.30.70.330:FF:000043">
    <property type="entry name" value="paraspeckle component 1 isoform X1"/>
    <property type="match status" value="1"/>
</dbReference>
<dbReference type="FunFam" id="3.30.70.330:FF:000126">
    <property type="entry name" value="paraspeckle component 1 isoform X1"/>
    <property type="match status" value="1"/>
</dbReference>
<dbReference type="Gene3D" id="3.30.70.330">
    <property type="match status" value="2"/>
</dbReference>
<dbReference type="Gene3D" id="6.10.250.1170">
    <property type="match status" value="1"/>
</dbReference>
<dbReference type="InterPro" id="IPR012975">
    <property type="entry name" value="NOPS"/>
</dbReference>
<dbReference type="InterPro" id="IPR012677">
    <property type="entry name" value="Nucleotide-bd_a/b_plait_sf"/>
</dbReference>
<dbReference type="InterPro" id="IPR034526">
    <property type="entry name" value="PSF_NOPS"/>
</dbReference>
<dbReference type="InterPro" id="IPR034525">
    <property type="entry name" value="PSF_RRM1"/>
</dbReference>
<dbReference type="InterPro" id="IPR035979">
    <property type="entry name" value="RBD_domain_sf"/>
</dbReference>
<dbReference type="InterPro" id="IPR000504">
    <property type="entry name" value="RRM_dom"/>
</dbReference>
<dbReference type="PANTHER" id="PTHR23189">
    <property type="entry name" value="RNA RECOGNITION MOTIF-CONTAINING"/>
    <property type="match status" value="1"/>
</dbReference>
<dbReference type="Pfam" id="PF08075">
    <property type="entry name" value="NOPS"/>
    <property type="match status" value="1"/>
</dbReference>
<dbReference type="Pfam" id="PF00076">
    <property type="entry name" value="RRM_1"/>
    <property type="match status" value="2"/>
</dbReference>
<dbReference type="SMART" id="SM00360">
    <property type="entry name" value="RRM"/>
    <property type="match status" value="2"/>
</dbReference>
<dbReference type="SUPFAM" id="SSF54928">
    <property type="entry name" value="RNA-binding domain, RBD"/>
    <property type="match status" value="1"/>
</dbReference>
<dbReference type="PROSITE" id="PS50102">
    <property type="entry name" value="RRM"/>
    <property type="match status" value="2"/>
</dbReference>
<comment type="function">
    <text evidence="1 6 7 8 9 11 12 14 21 23 25 26 28">DNA- and RNA binding protein, involved in several nuclear processes. Essential pre-mRNA splicing factor required early in spliceosome formation and for splicing catalytic step II, probably as a heteromer with NONO. Binds to pre-mRNA in spliceosome C complex, and specifically binds to intronic polypyrimidine tracts. Involved in regulation of signal-induced alternative splicing. During splicing of PTPRC/CD45, a phosphorylated form is sequestered by THRAP3 from the pre-mRNA in resting T-cells; T-cell activation and subsequent reduced phosphorylation is proposed to lead to release from THRAP3 allowing binding to pre-mRNA splicing regulatotry elements which represses exon inclusion. Interacts with U5 snRNA, probably by binding to a purine-rich sequence located on the 3' side of U5 snRNA stem 1b. May be involved in a pre-mRNA coupled splicing and polyadenylation process as component of a snRNP-free complex with SNRPA/U1A. The SFPQ-NONO heteromer associated with MATR3 may play a role in nuclear retention of defective RNAs. SFPQ may be involved in homologous DNA pairing; in vitro, promotes the invasion of ssDNA between a duplex DNA and produces a D-loop formation. The SFPQ-NONO heteromer may be involved in DNA unwinding by modulating the function of topoisomerase I/TOP1; in vitro, stimulates dissociation of TOP1 from DNA after cleavage and enhances its jumping between separate DNA helices. The SFPQ-NONO heteromer binds DNA (PubMed:25765647). The SFPQ-NONO heteromer may be involved in DNA non-homologous end joining (NHEJ) required for double-strand break repair and V(D)J recombination and may stabilize paired DNA ends; in vitro, the complex strongly stimulates DNA end joining, binds directly to the DNA substrates and cooperates with the Ku70/G22P1-Ku80/XRCC5 (Ku) dimer to establish a functional preligation complex. SFPQ is involved in transcriptional regulation. Functions as a transcriptional activator (PubMed:25765647). Transcriptional repression is mediated by an interaction of SFPQ with SIN3A and subsequent recruitment of histone deacetylases (HDACs). The SFPQ-NONO-NR5A1 complex binds to the CYP17 promoter and regulates basal and cAMP-dependent transcriptional activity. SFPQ isoform Long binds to the DNA binding domains (DBD) of nuclear hormone receptors, like RXRA and probably THRA, and acts as a transcriptional corepressor in absence of hormone ligands. Binds the DNA sequence 5'-CTGAGTC-3' in the insulin-like growth factor response element (IGFRE) and inhibits IGF1-stimulated transcriptional activity. Regulates the circadian clock by repressing the transcriptional activator activity of the CLOCK-BMAL1 heterodimer. Required for the transcriptional repression of circadian target genes, such as PER1, mediated by the large PER complex through histone deacetylation (By similarity). Required for the assembly of nuclear speckles (PubMed:25765647). Plays a role in the regulation of DNA virus-mediated innate immune response by assembling into the HDP-RNP complex, a complex that serves as a platform for IRF3 phosphorylation and subsequent innate immune response activation through the cGAS-STING pathway (PubMed:28712728).</text>
</comment>
<comment type="subunit">
    <text evidence="1 5 9 10 11 12 13 14 15 18 19 21 22 23 24 26 27 29 30 31">Heterodimer with NONO (PubMed:25765647). Monomer and component of the SFPQ-NONO complex, which is probably a heterotetramer of two 52 kDa (NONO) and two 100 kDa (SFPQ) subunits (PubMed:25765647, PubMed:8439294). The coiled coil domain mediates interaction with NONO, and can also mediate formation of long, linear homooligomers (in vitro) (PubMed:25765647). SFPQ is a component of spliceosome and U5.4/6 snRNP complexes (PubMed:12403470, PubMed:8045264, PubMed:9409622). Interacts with SNRPA/U1A (PubMed:9848648). Component of a snRNP-free complex with SNRPA/U1A (PubMed:9848648). Part of complex consisting of SFPQ, NONO and MATR3 (PubMed:11525732). Interacts with polypyrimidine tract-binding protein 1/PTB (PubMed:10653975). Part of a complex consisting of SFPQ, NONO and NR5A1 (PubMed:11897684). Interacts with RXRA, probably THRA, and SIN3A (PubMed:11259580). Interacts with TOP1 (PubMed:9756848). Part of a complex consisting of SFPQ, NONO and TOP1 (PubMed:9756848). Interacts with SNRNP70 in apoptotic cells (PubMed:11514619). Interacts with PSPC1. Interacts with RNF43 (PubMed:18655028). Interacts with PITX3 and NR4A2/NURR1 (By similarity). Interacts with PTK6 (PubMed:19439179). Interacts with THRAP3; the interaction is dependent on SFPQ phosphorylation at 'Thr-687' and inhibits binding of SFPQ to a ESS1 exonic splicing silencer element-containing RNA (PubMed:20932480). The large PER complex involved in the histone deacetylation is composed of at least HDAC1, PER2, SFPQ and SIN3A. Interacts with PER1 and PER2 (By similarity). Interacts with PQBP1 (PubMed:21933836). Component of a multiprotein complex with NONO and WASL (PubMed:16767080). Interacts with ERCC6 (PubMed:26030138).</text>
</comment>
<comment type="subunit">
    <text evidence="20 25">(Microbial infection) Interacts with M.tuberculosis protein Rv3654c, which probably leads to the cleavage of PSF, diminishes the level of caspase-8 in macrophages and suppresses macrophage apoptosis by blocking the extrinsic pathway. Part of the HDP-RNP complex composed of at least HEXIM1, PRKDC, XRCC5, XRCC6, paraspeckle proteins (SFPQ, NONO, PSPC1, RBM14, and MATR3) and NEAT1 RNA.</text>
</comment>
<comment type="interaction">
    <interactant intactId="EBI-355453">
        <id>P23246</id>
    </interactant>
    <interactant intactId="EBI-366305">
        <id>Q06787</id>
        <label>FMR1</label>
    </interactant>
    <organismsDiffer>false</organismsDiffer>
    <experiments>3</experiments>
</comment>
<comment type="interaction">
    <interactant intactId="EBI-355453">
        <id>P23246</id>
    </interactant>
    <interactant intactId="EBI-1049011">
        <id>P41235</id>
        <label>HNF4A</label>
    </interactant>
    <organismsDiffer>false</organismsDiffer>
    <experiments>2</experiments>
</comment>
<comment type="interaction">
    <interactant intactId="EBI-355453">
        <id>P23246</id>
    </interactant>
    <interactant intactId="EBI-350527">
        <id>Q15233</id>
        <label>NONO</label>
    </interactant>
    <organismsDiffer>false</organismsDiffer>
    <experiments>10</experiments>
</comment>
<comment type="interaction">
    <interactant intactId="EBI-355453">
        <id>P23246</id>
    </interactant>
    <interactant intactId="EBI-1392258">
        <id>Q8WXF1</id>
        <label>PSPC1</label>
    </interactant>
    <organismsDiffer>false</organismsDiffer>
    <experiments>4</experiments>
</comment>
<comment type="interaction">
    <interactant intactId="EBI-355453">
        <id>P23246</id>
    </interactant>
    <interactant intactId="EBI-350540">
        <id>P26599</id>
        <label>PTBP1</label>
    </interactant>
    <organismsDiffer>false</organismsDiffer>
    <experiments>2</experiments>
</comment>
<comment type="interaction">
    <interactant intactId="EBI-355453">
        <id>P23246</id>
    </interactant>
    <interactant intactId="EBI-1383632">
        <id>Q13882</id>
        <label>PTK6</label>
    </interactant>
    <organismsDiffer>false</organismsDiffer>
    <experiments>5</experiments>
</comment>
<comment type="interaction">
    <interactant intactId="EBI-355453">
        <id>P23246</id>
    </interactant>
    <interactant intactId="EBI-347218">
        <id>Q96ST3</id>
        <label>SIN3A</label>
    </interactant>
    <organismsDiffer>false</organismsDiffer>
    <experiments>2</experiments>
</comment>
<comment type="interaction">
    <interactant intactId="EBI-355453">
        <id>P23246</id>
    </interactant>
    <interactant intactId="EBI-607085">
        <id>P09012</id>
        <label>SNRPA</label>
    </interactant>
    <organismsDiffer>false</organismsDiffer>
    <experiments>5</experiments>
</comment>
<comment type="interaction">
    <interactant intactId="EBI-355453">
        <id>P23246</id>
    </interactant>
    <interactant intactId="EBI-352039">
        <id>Q9Y2W1</id>
        <label>THRAP3</label>
    </interactant>
    <organismsDiffer>false</organismsDiffer>
    <experiments>6</experiments>
</comment>
<comment type="interaction">
    <interactant intactId="EBI-355453">
        <id>P23246</id>
    </interactant>
    <interactant intactId="EBI-1185167">
        <id>Q8AZK7</id>
        <label>EBNA-LP</label>
    </interactant>
    <organismsDiffer>true</organismsDiffer>
    <experiments>2</experiments>
</comment>
<comment type="interaction">
    <interactant intactId="EBI-355463">
        <id>P23246-1</id>
    </interactant>
    <interactant intactId="EBI-346715">
        <id>P28700</id>
        <label>Rxra</label>
    </interactant>
    <organismsDiffer>true</organismsDiffer>
    <experiments>3</experiments>
</comment>
<comment type="interaction">
    <interactant intactId="EBI-355463">
        <id>P23246-1</id>
    </interactant>
    <interactant intactId="EBI-286261">
        <id>P04625</id>
        <label>THRA</label>
    </interactant>
    <organismsDiffer>true</organismsDiffer>
    <experiments>2</experiments>
</comment>
<comment type="subcellular location">
    <subcellularLocation>
        <location evidence="23">Nucleus speckle</location>
    </subcellularLocation>
    <subcellularLocation>
        <location evidence="5 19 31">Nucleus matrix</location>
    </subcellularLocation>
    <subcellularLocation>
        <location evidence="19">Cytoplasm</location>
    </subcellularLocation>
    <text evidence="19">Predominantly in nuclear matrix.</text>
</comment>
<comment type="alternative products">
    <event type="alternative splicing"/>
    <isoform>
        <id>P23246-1</id>
        <name>Long</name>
        <name>A</name>
        <sequence type="displayed"/>
    </isoform>
    <isoform>
        <id>P23246-2</id>
        <name>Short</name>
        <name>F</name>
        <sequence type="described" ref="VSP_005855"/>
    </isoform>
    <text>Additional isoforms seem to exist.</text>
</comment>
<comment type="domain">
    <text evidence="23">The coiled coil domain mediates interaction with NONO, and can also mediate formation of long, linear homooligomers (in vitro). The coiled coil domain is required for optimal DNA binding, and optimal transcription activation.</text>
</comment>
<comment type="PTM">
    <text>The N-terminus is blocked.</text>
</comment>
<comment type="PTM">
    <text evidence="8 10 16 17 19 21">Phosphorylated on multiple serine and threonine residues during apoptosis. In vitro phosphorylated by PKC. Phosphorylation stimulates binding to DNA and D-loop formation, but inhibits binding to RNA. Phosphorylation of C-terminal tyrosines promotes its cytoplasmic localization, impaired its binding to polypyrimidine RNA and led to cell cycle arrest. In resting T-cells is phosphorylated at Thr-687 by GSK3B which is proposed to promote association with THRAP and to prevent binding to PTPRC/CD45 pre-mRNA; T-cell activation leads to reduced phosphorylation at Thr-687.</text>
</comment>
<comment type="disease">
    <text>A chromosomal aberration involving SFPQ may be a cause of papillary renal cell carcinoma (PRCC). Translocation t(X;1)(p11.2;p34) with TFE3.</text>
</comment>
<comment type="caution">
    <text evidence="36">Was originally thought to be myoblast cell surface antigen 24.1D5 and a possible membrane-bound protein ectokinase.</text>
</comment>
<comment type="online information" name="Atlas of Genetics and Cytogenetics in Oncology and Haematology">
    <link uri="https://atlasgeneticsoncology.org/gene/167/PSF"/>
</comment>
<sequence>MSRDRFRSRGGGGGGFHRRGGGGGRGGLHDFRSPPPGMGLNQNRGPMGPGPGQSGPKPPIPPPPPHQQQQQPPPQQPPPQQPPPHQPPPHPQPHQQQQPPPPPQDSSKPVVAQGPGPAPGVGSAPPASSSAPPATPPTSGAPPGSGPGPTPTPPPAVTSAPPGAPPPTPPSSGVPTTPPQAGGPPPPPAAVPGPGPGPKQGPGPGGPKGGKMPGGPKPGGGPGLSTPGGHPKPPHRGGGEPRGGRQHHPPYHQQHHQGPPPGGPGGRSEEKISDSEGFKANLSLLRRPGEKTYTQRCRLFVGNLPADITEDEFKRLFAKYGEPGEVFINKGKGFGFIKLESRALAEIAKAELDDTPMRGRQLRVRFATHAAALSVRNLSPYVSNELLEEAFSQFGPIERAVVIVDDRGRSTGKGIVEFASKPAARKAFERCSEGVFLLTTTPRPVIVEPLEQLDDEDGLPEKLAQKNPMYQKERETPPRFAQHGTFEYEYSQRWKSLDEMEKQQREQVEKNMKDAKDKLESEMEDAYHEHQANLLRQDLMRRQEELRRMEELHNQEMQKRKEMQLRQEEERRRREEEMMIRQREMEEQMRRQREESYSRMGYMDPRERDMRMGGGGAMNMGDPYGSGGQKFPPLGGGGGIGYEANPGVPPATMSGSMMGSDMRTERFGQGGAGPVGGQGPRGMGPGTPAGYGRGREEYEGPNKKPRF</sequence>
<organism>
    <name type="scientific">Homo sapiens</name>
    <name type="common">Human</name>
    <dbReference type="NCBI Taxonomy" id="9606"/>
    <lineage>
        <taxon>Eukaryota</taxon>
        <taxon>Metazoa</taxon>
        <taxon>Chordata</taxon>
        <taxon>Craniata</taxon>
        <taxon>Vertebrata</taxon>
        <taxon>Euteleostomi</taxon>
        <taxon>Mammalia</taxon>
        <taxon>Eutheria</taxon>
        <taxon>Euarchontoglires</taxon>
        <taxon>Primates</taxon>
        <taxon>Haplorrhini</taxon>
        <taxon>Catarrhini</taxon>
        <taxon>Hominidae</taxon>
        <taxon>Homo</taxon>
    </lineage>
</organism>
<keyword id="KW-0002">3D-structure</keyword>
<keyword id="KW-0007">Acetylation</keyword>
<keyword id="KW-0010">Activator</keyword>
<keyword id="KW-0025">Alternative splicing</keyword>
<keyword id="KW-0090">Biological rhythms</keyword>
<keyword id="KW-0160">Chromosomal rearrangement</keyword>
<keyword id="KW-0175">Coiled coil</keyword>
<keyword id="KW-0963">Cytoplasm</keyword>
<keyword id="KW-0903">Direct protein sequencing</keyword>
<keyword id="KW-0227">DNA damage</keyword>
<keyword id="KW-0233">DNA recombination</keyword>
<keyword id="KW-0234">DNA repair</keyword>
<keyword id="KW-0238">DNA-binding</keyword>
<keyword id="KW-0391">Immunity</keyword>
<keyword id="KW-0399">Innate immunity</keyword>
<keyword id="KW-1017">Isopeptide bond</keyword>
<keyword id="KW-0488">Methylation</keyword>
<keyword id="KW-0507">mRNA processing</keyword>
<keyword id="KW-0508">mRNA splicing</keyword>
<keyword id="KW-0539">Nucleus</keyword>
<keyword id="KW-0597">Phosphoprotein</keyword>
<keyword id="KW-1267">Proteomics identification</keyword>
<keyword id="KW-1185">Reference proteome</keyword>
<keyword id="KW-0677">Repeat</keyword>
<keyword id="KW-0678">Repressor</keyword>
<keyword id="KW-0694">RNA-binding</keyword>
<keyword id="KW-0804">Transcription</keyword>
<keyword id="KW-0805">Transcription regulation</keyword>
<keyword id="KW-0832">Ubl conjugation</keyword>
<gene>
    <name type="primary">SFPQ</name>
    <name type="synonym">PSF</name>
</gene>
<accession>P23246</accession>
<accession>P30808</accession>
<accession>Q5SZ71</accession>
<proteinExistence type="evidence at protein level"/>
<protein>
    <recommendedName>
        <fullName>Splicing factor, proline- and glutamine-rich</fullName>
    </recommendedName>
    <alternativeName>
        <fullName>100 kDa DNA-pairing protein</fullName>
        <shortName>hPOMp100</shortName>
    </alternativeName>
    <alternativeName>
        <fullName>DNA-binding p52/p100 complex, 100 kDa subunit</fullName>
    </alternativeName>
    <alternativeName>
        <fullName evidence="34">Polypyrimidine tract-binding protein-associated-splicing factor</fullName>
        <shortName evidence="33">PSF</shortName>
        <shortName>PTB-associated-splicing factor</shortName>
    </alternativeName>
</protein>
<name>SFPQ_HUMAN</name>
<evidence type="ECO:0000250" key="1">
    <source>
        <dbReference type="UniProtKB" id="Q8VIJ6"/>
    </source>
</evidence>
<evidence type="ECO:0000255" key="2"/>
<evidence type="ECO:0000255" key="3">
    <source>
        <dbReference type="PROSITE-ProRule" id="PRU00176"/>
    </source>
</evidence>
<evidence type="ECO:0000256" key="4">
    <source>
        <dbReference type="SAM" id="MobiDB-lite"/>
    </source>
</evidence>
<evidence type="ECO:0000269" key="5">
    <source>
    </source>
</evidence>
<evidence type="ECO:0000269" key="6">
    <source>
    </source>
</evidence>
<evidence type="ECO:0000269" key="7">
    <source>
    </source>
</evidence>
<evidence type="ECO:0000269" key="8">
    <source>
    </source>
</evidence>
<evidence type="ECO:0000269" key="9">
    <source>
    </source>
</evidence>
<evidence type="ECO:0000269" key="10">
    <source>
    </source>
</evidence>
<evidence type="ECO:0000269" key="11">
    <source>
    </source>
</evidence>
<evidence type="ECO:0000269" key="12">
    <source>
    </source>
</evidence>
<evidence type="ECO:0000269" key="13">
    <source>
    </source>
</evidence>
<evidence type="ECO:0000269" key="14">
    <source>
    </source>
</evidence>
<evidence type="ECO:0000269" key="15">
    <source>
    </source>
</evidence>
<evidence type="ECO:0000269" key="16">
    <source>
    </source>
</evidence>
<evidence type="ECO:0000269" key="17">
    <source>
    </source>
</evidence>
<evidence type="ECO:0000269" key="18">
    <source>
    </source>
</evidence>
<evidence type="ECO:0000269" key="19">
    <source>
    </source>
</evidence>
<evidence type="ECO:0000269" key="20">
    <source>
    </source>
</evidence>
<evidence type="ECO:0000269" key="21">
    <source>
    </source>
</evidence>
<evidence type="ECO:0000269" key="22">
    <source>
    </source>
</evidence>
<evidence type="ECO:0000269" key="23">
    <source>
    </source>
</evidence>
<evidence type="ECO:0000269" key="24">
    <source>
    </source>
</evidence>
<evidence type="ECO:0000269" key="25">
    <source>
    </source>
</evidence>
<evidence type="ECO:0000269" key="26">
    <source>
    </source>
</evidence>
<evidence type="ECO:0000269" key="27">
    <source>
    </source>
</evidence>
<evidence type="ECO:0000269" key="28">
    <source>
    </source>
</evidence>
<evidence type="ECO:0000269" key="29">
    <source>
    </source>
</evidence>
<evidence type="ECO:0000269" key="30">
    <source>
    </source>
</evidence>
<evidence type="ECO:0000269" key="31">
    <source>
    </source>
</evidence>
<evidence type="ECO:0000269" key="32">
    <source ref="4"/>
</evidence>
<evidence type="ECO:0000303" key="33">
    <source>
    </source>
</evidence>
<evidence type="ECO:0000303" key="34">
    <source>
    </source>
</evidence>
<evidence type="ECO:0000305" key="35"/>
<evidence type="ECO:0000305" key="36">
    <source>
    </source>
</evidence>
<evidence type="ECO:0007744" key="37">
    <source>
    </source>
</evidence>
<evidence type="ECO:0007744" key="38">
    <source>
    </source>
</evidence>
<evidence type="ECO:0007744" key="39">
    <source>
    </source>
</evidence>
<evidence type="ECO:0007744" key="40">
    <source>
    </source>
</evidence>
<evidence type="ECO:0007744" key="41">
    <source>
    </source>
</evidence>
<evidence type="ECO:0007744" key="42">
    <source>
    </source>
</evidence>
<evidence type="ECO:0007744" key="43">
    <source>
    </source>
</evidence>
<evidence type="ECO:0007744" key="44">
    <source>
    </source>
</evidence>
<evidence type="ECO:0007744" key="45">
    <source>
    </source>
</evidence>
<evidence type="ECO:0007744" key="46">
    <source>
    </source>
</evidence>
<evidence type="ECO:0007744" key="47">
    <source>
    </source>
</evidence>
<evidence type="ECO:0007829" key="48">
    <source>
        <dbReference type="PDB" id="4WII"/>
    </source>
</evidence>
<evidence type="ECO:0007829" key="49">
    <source>
        <dbReference type="PDB" id="4WIJ"/>
    </source>
</evidence>
<evidence type="ECO:0007829" key="50">
    <source>
        <dbReference type="PDB" id="6NCQ"/>
    </source>
</evidence>
<evidence type="ECO:0007829" key="51">
    <source>
        <dbReference type="PDB" id="7LRQ"/>
    </source>
</evidence>
<evidence type="ECO:0007829" key="52">
    <source>
        <dbReference type="PDB" id="7LRU"/>
    </source>
</evidence>
<evidence type="ECO:0007829" key="53">
    <source>
        <dbReference type="PDB" id="7SP0"/>
    </source>
</evidence>
<evidence type="ECO:0007829" key="54">
    <source>
        <dbReference type="PDB" id="7UJ1"/>
    </source>
</evidence>
<feature type="chain" id="PRO_0000081909" description="Splicing factor, proline- and glutamine-rich">
    <location>
        <begin position="1"/>
        <end position="707"/>
    </location>
</feature>
<feature type="repeat" description="1">
    <location>
        <begin position="9"/>
        <end position="11"/>
    </location>
</feature>
<feature type="repeat" description="2">
    <location>
        <begin position="19"/>
        <end position="21"/>
    </location>
</feature>
<feature type="repeat" description="3">
    <location>
        <begin position="25"/>
        <end position="27"/>
    </location>
</feature>
<feature type="domain" description="RRM 1" evidence="3">
    <location>
        <begin position="297"/>
        <end position="369"/>
    </location>
</feature>
<feature type="domain" description="RRM 2" evidence="3">
    <location>
        <begin position="371"/>
        <end position="452"/>
    </location>
</feature>
<feature type="region of interest" description="Disordered" evidence="4">
    <location>
        <begin position="1"/>
        <end position="273"/>
    </location>
</feature>
<feature type="region of interest" description="3 X 3 AA repeats of R-G-G">
    <location>
        <begin position="9"/>
        <end position="27"/>
    </location>
</feature>
<feature type="region of interest" description="Disordered" evidence="4">
    <location>
        <begin position="579"/>
        <end position="707"/>
    </location>
</feature>
<feature type="coiled-coil region" evidence="2 23">
    <location>
        <begin position="497"/>
        <end position="596"/>
    </location>
</feature>
<feature type="compositionally biased region" description="Gly residues" evidence="4">
    <location>
        <begin position="9"/>
        <end position="26"/>
    </location>
</feature>
<feature type="compositionally biased region" description="Pro residues" evidence="4">
    <location>
        <begin position="56"/>
        <end position="104"/>
    </location>
</feature>
<feature type="compositionally biased region" description="Low complexity" evidence="4">
    <location>
        <begin position="120"/>
        <end position="132"/>
    </location>
</feature>
<feature type="compositionally biased region" description="Pro residues" evidence="4">
    <location>
        <begin position="133"/>
        <end position="205"/>
    </location>
</feature>
<feature type="compositionally biased region" description="Gly residues" evidence="4">
    <location>
        <begin position="206"/>
        <end position="223"/>
    </location>
</feature>
<feature type="compositionally biased region" description="Basic residues" evidence="4">
    <location>
        <begin position="244"/>
        <end position="255"/>
    </location>
</feature>
<feature type="compositionally biased region" description="Basic and acidic residues" evidence="4">
    <location>
        <begin position="579"/>
        <end position="597"/>
    </location>
</feature>
<feature type="compositionally biased region" description="Gly residues" evidence="4">
    <location>
        <begin position="612"/>
        <end position="641"/>
    </location>
</feature>
<feature type="compositionally biased region" description="Gly residues" evidence="4">
    <location>
        <begin position="668"/>
        <end position="692"/>
    </location>
</feature>
<feature type="compositionally biased region" description="Basic and acidic residues" evidence="4">
    <location>
        <begin position="693"/>
        <end position="707"/>
    </location>
</feature>
<feature type="site" description="Breakpoint for translocation to form SFPQ-TFE3">
    <location>
        <begin position="662"/>
        <end position="663"/>
    </location>
</feature>
<feature type="modified residue" description="Phosphoserine; by MKNK2" evidence="17">
    <location>
        <position position="8"/>
    </location>
</feature>
<feature type="modified residue" description="Asymmetric dimethylarginine; alternate" evidence="1">
    <location>
        <position position="9"/>
    </location>
</feature>
<feature type="modified residue" description="Omega-N-methylarginine; alternate" evidence="1">
    <location>
        <position position="9"/>
    </location>
</feature>
<feature type="modified residue" description="Phosphoserine" evidence="41 42 43">
    <location>
        <position position="33"/>
    </location>
</feature>
<feature type="modified residue" description="N6-acetyllysine" evidence="1">
    <location>
        <position position="208"/>
    </location>
</feature>
<feature type="modified residue" description="Omega-N-methylarginine" evidence="44">
    <location>
        <position position="236"/>
    </location>
</feature>
<feature type="modified residue" description="Omega-N-methylarginine" evidence="44">
    <location>
        <position position="242"/>
    </location>
</feature>
<feature type="modified residue" description="Omega-N-methylarginine" evidence="44">
    <location>
        <position position="245"/>
    </location>
</feature>
<feature type="modified residue" description="Phosphoserine" evidence="38 42 43">
    <location>
        <position position="273"/>
    </location>
</feature>
<feature type="modified residue" description="Phosphoserine; by MKNK2" evidence="17 42 43">
    <location>
        <position position="283"/>
    </location>
</feature>
<feature type="modified residue" description="Phosphotyrosine; by ALK" evidence="16">
    <location>
        <position position="293"/>
    </location>
</feature>
<feature type="modified residue" description="N6,N6-dimethyllysine" evidence="32">
    <location>
        <position position="314"/>
    </location>
</feature>
<feature type="modified residue" description="N6-acetyllysine" evidence="39">
    <location>
        <position position="319"/>
    </location>
</feature>
<feature type="modified residue" description="N6-acetyllysine; alternate" evidence="39">
    <location>
        <position position="338"/>
    </location>
</feature>
<feature type="modified residue" description="Phosphothreonine" evidence="43">
    <location>
        <position position="368"/>
    </location>
</feature>
<feature type="modified residue" description="Phosphoserine" evidence="43">
    <location>
        <position position="374"/>
    </location>
</feature>
<feature type="modified residue" description="Phosphoserine" evidence="40">
    <location>
        <position position="379"/>
    </location>
</feature>
<feature type="modified residue" description="N6-acetyllysine" evidence="39">
    <location>
        <position position="421"/>
    </location>
</feature>
<feature type="modified residue" description="N6-acetyllysine" evidence="39">
    <location>
        <position position="472"/>
    </location>
</feature>
<feature type="modified residue" description="Phosphoserine" evidence="43">
    <location>
        <position position="496"/>
    </location>
</feature>
<feature type="modified residue" description="Dimethylated arginine" evidence="32">
    <location>
        <position position="571"/>
    </location>
</feature>
<feature type="modified residue" description="Phosphoserine" evidence="41 43">
    <location>
        <position position="626"/>
    </location>
</feature>
<feature type="modified residue" description="Omega-N-methylarginine" evidence="32 44">
    <location>
        <position position="681"/>
    </location>
</feature>
<feature type="modified residue" description="Phosphothreonine" evidence="21 37 38 43">
    <location>
        <position position="687"/>
    </location>
</feature>
<feature type="modified residue" description="Phosphotyrosine" evidence="43">
    <location>
        <position position="691"/>
    </location>
</feature>
<feature type="modified residue" description="Dimethylated arginine; alternate" evidence="32">
    <location>
        <position position="693"/>
    </location>
</feature>
<feature type="modified residue" description="Omega-N-methylarginine; alternate" evidence="44">
    <location>
        <position position="693"/>
    </location>
</feature>
<feature type="modified residue" description="Omega-N-methylarginine" evidence="44">
    <location>
        <position position="695"/>
    </location>
</feature>
<feature type="cross-link" description="Glycyl lysine isopeptide (Lys-Gly) (interchain with G-Cter in SUMO2)" evidence="47">
    <location>
        <position position="271"/>
    </location>
</feature>
<feature type="cross-link" description="Glycyl lysine isopeptide (Lys-Gly) (interchain with G-Cter in SUMO2)" evidence="47">
    <location>
        <position position="279"/>
    </location>
</feature>
<feature type="cross-link" description="Glycyl lysine isopeptide (Lys-Gly) (interchain with G-Cter in SUMO2); alternate" evidence="45 46 47">
    <location>
        <position position="338"/>
    </location>
</feature>
<feature type="splice variant" id="VSP_005855" description="In isoform Short." evidence="35">
    <original>RTERFGQGGAGPVGGQGPRGMGPGTPAGYGRGREEYEGPNKKPRF</original>
    <variation>VRMIDVG</variation>
    <location>
        <begin position="663"/>
        <end position="707"/>
    </location>
</feature>
<feature type="mutagenesis site" description="Impairs DNA binding and ability to mediate transcriptional activation; when associated with A-539; A-546 and A-549." evidence="23">
    <original>L</original>
    <variation>A</variation>
    <location>
        <position position="535"/>
    </location>
</feature>
<feature type="mutagenesis site" description="Impairs DNA binding and ability to mediate transcriptional activation; when associated with A-535; A-546 and A-549." evidence="23">
    <original>L</original>
    <variation>A</variation>
    <location>
        <position position="539"/>
    </location>
</feature>
<feature type="mutagenesis site" description="Impairs DNA binding and ability to mediate transcriptional activation; when associated with A-535; A-539 and A-549." evidence="23">
    <original>L</original>
    <variation>A</variation>
    <location>
        <position position="546"/>
    </location>
</feature>
<feature type="mutagenesis site" description="Impairs DNA binding and ability to mediate transcriptional activation; when associated with A-535; A-539 and A-546." evidence="23">
    <original>M</original>
    <variation>A</variation>
    <location>
        <position position="549"/>
    </location>
</feature>
<feature type="mutagenesis site" description="Abolishes phosphorylation by GSK3B. Impairs interaction with THRAP3." evidence="21">
    <original>T</original>
    <variation>A</variation>
    <location>
        <position position="687"/>
    </location>
</feature>
<feature type="mutagenesis site" description="No effect on interaction with THRAP3 (phosphomimetic)." evidence="21">
    <original>T</original>
    <variation>D</variation>
    <location>
        <position position="687"/>
    </location>
</feature>
<feature type="sequence conflict" description="In Ref. 5; AA sequence." evidence="35" ref="5">
    <original>G</original>
    <variation>R</variation>
    <location>
        <position position="243"/>
    </location>
</feature>
<feature type="helix" evidence="52">
    <location>
        <begin position="282"/>
        <end position="284"/>
    </location>
</feature>
<feature type="strand" evidence="53">
    <location>
        <begin position="288"/>
        <end position="290"/>
    </location>
</feature>
<feature type="helix" evidence="52">
    <location>
        <begin position="295"/>
        <end position="297"/>
    </location>
</feature>
<feature type="strand" evidence="52">
    <location>
        <begin position="298"/>
        <end position="303"/>
    </location>
</feature>
<feature type="helix" evidence="52">
    <location>
        <begin position="310"/>
        <end position="316"/>
    </location>
</feature>
<feature type="helix" evidence="52">
    <location>
        <begin position="317"/>
        <end position="320"/>
    </location>
</feature>
<feature type="strand" evidence="52">
    <location>
        <begin position="325"/>
        <end position="329"/>
    </location>
</feature>
<feature type="turn" evidence="52">
    <location>
        <begin position="330"/>
        <end position="333"/>
    </location>
</feature>
<feature type="strand" evidence="52">
    <location>
        <begin position="334"/>
        <end position="338"/>
    </location>
</feature>
<feature type="helix" evidence="52">
    <location>
        <begin position="342"/>
        <end position="352"/>
    </location>
</feature>
<feature type="strand" evidence="48">
    <location>
        <begin position="356"/>
        <end position="361"/>
    </location>
</feature>
<feature type="strand" evidence="52">
    <location>
        <begin position="363"/>
        <end position="366"/>
    </location>
</feature>
<feature type="strand" evidence="52">
    <location>
        <begin position="372"/>
        <end position="376"/>
    </location>
</feature>
<feature type="helix" evidence="52">
    <location>
        <begin position="384"/>
        <end position="391"/>
    </location>
</feature>
<feature type="turn" evidence="52">
    <location>
        <begin position="392"/>
        <end position="394"/>
    </location>
</feature>
<feature type="strand" evidence="52">
    <location>
        <begin position="397"/>
        <end position="404"/>
    </location>
</feature>
<feature type="strand" evidence="51">
    <location>
        <begin position="406"/>
        <end position="408"/>
    </location>
</feature>
<feature type="strand" evidence="52">
    <location>
        <begin position="410"/>
        <end position="420"/>
    </location>
</feature>
<feature type="helix" evidence="52">
    <location>
        <begin position="421"/>
        <end position="433"/>
    </location>
</feature>
<feature type="strand" evidence="52">
    <location>
        <begin position="437"/>
        <end position="441"/>
    </location>
</feature>
<feature type="strand" evidence="52">
    <location>
        <begin position="446"/>
        <end position="449"/>
    </location>
</feature>
<feature type="strand" evidence="50">
    <location>
        <begin position="455"/>
        <end position="457"/>
    </location>
</feature>
<feature type="helix" evidence="53">
    <location>
        <begin position="461"/>
        <end position="464"/>
    </location>
</feature>
<feature type="strand" evidence="50">
    <location>
        <begin position="467"/>
        <end position="469"/>
    </location>
</feature>
<feature type="helix" evidence="53">
    <location>
        <begin position="470"/>
        <end position="474"/>
    </location>
</feature>
<feature type="strand" evidence="53">
    <location>
        <begin position="478"/>
        <end position="480"/>
    </location>
</feature>
<feature type="strand" evidence="54">
    <location>
        <begin position="483"/>
        <end position="485"/>
    </location>
</feature>
<feature type="helix" evidence="49">
    <location>
        <begin position="486"/>
        <end position="493"/>
    </location>
</feature>
<feature type="helix" evidence="52">
    <location>
        <begin position="505"/>
        <end position="530"/>
    </location>
</feature>
<feature type="turn" evidence="52">
    <location>
        <begin position="531"/>
        <end position="533"/>
    </location>
</feature>
<feature type="turn" evidence="54">
    <location>
        <begin position="536"/>
        <end position="539"/>
    </location>
</feature>
<feature type="helix" evidence="49">
    <location>
        <begin position="555"/>
        <end position="588"/>
    </location>
</feature>